<keyword id="KW-0963">Cytoplasm</keyword>
<keyword id="KW-0690">Ribosome biogenesis</keyword>
<sequence>MARQYRSDRLSQEIEKEVSDILRRRVRDPRVEGVTITGVDVTGDLQQAKIYYSILSDKASDDQKTKAGLEKASGLIRKELGSRLSIYKTPELSFIRDESVQYGDKIDQLLNKLNRD</sequence>
<evidence type="ECO:0000255" key="1">
    <source>
        <dbReference type="HAMAP-Rule" id="MF_00003"/>
    </source>
</evidence>
<proteinExistence type="inferred from homology"/>
<dbReference type="EMBL" id="CP000422">
    <property type="protein sequence ID" value="ABJ67950.1"/>
    <property type="molecule type" value="Genomic_DNA"/>
</dbReference>
<dbReference type="RefSeq" id="WP_002833619.1">
    <property type="nucleotide sequence ID" value="NC_008525.1"/>
</dbReference>
<dbReference type="SMR" id="Q03FS2"/>
<dbReference type="STRING" id="278197.PEPE_0891"/>
<dbReference type="GeneID" id="33062019"/>
<dbReference type="KEGG" id="ppe:PEPE_0891"/>
<dbReference type="eggNOG" id="COG0858">
    <property type="taxonomic scope" value="Bacteria"/>
</dbReference>
<dbReference type="HOGENOM" id="CLU_089475_3_0_9"/>
<dbReference type="OrthoDB" id="307788at2"/>
<dbReference type="Proteomes" id="UP000000773">
    <property type="component" value="Chromosome"/>
</dbReference>
<dbReference type="GO" id="GO:0005829">
    <property type="term" value="C:cytosol"/>
    <property type="evidence" value="ECO:0007669"/>
    <property type="project" value="TreeGrafter"/>
</dbReference>
<dbReference type="GO" id="GO:0043024">
    <property type="term" value="F:ribosomal small subunit binding"/>
    <property type="evidence" value="ECO:0007669"/>
    <property type="project" value="TreeGrafter"/>
</dbReference>
<dbReference type="GO" id="GO:0030490">
    <property type="term" value="P:maturation of SSU-rRNA"/>
    <property type="evidence" value="ECO:0007669"/>
    <property type="project" value="UniProtKB-UniRule"/>
</dbReference>
<dbReference type="Gene3D" id="3.30.300.20">
    <property type="match status" value="1"/>
</dbReference>
<dbReference type="HAMAP" id="MF_00003">
    <property type="entry name" value="RbfA"/>
    <property type="match status" value="1"/>
</dbReference>
<dbReference type="InterPro" id="IPR015946">
    <property type="entry name" value="KH_dom-like_a/b"/>
</dbReference>
<dbReference type="InterPro" id="IPR000238">
    <property type="entry name" value="RbfA"/>
</dbReference>
<dbReference type="InterPro" id="IPR023799">
    <property type="entry name" value="RbfA_dom_sf"/>
</dbReference>
<dbReference type="InterPro" id="IPR020053">
    <property type="entry name" value="Ribosome-bd_factorA_CS"/>
</dbReference>
<dbReference type="NCBIfam" id="TIGR00082">
    <property type="entry name" value="rbfA"/>
    <property type="match status" value="1"/>
</dbReference>
<dbReference type="PANTHER" id="PTHR33515">
    <property type="entry name" value="RIBOSOME-BINDING FACTOR A, CHLOROPLASTIC-RELATED"/>
    <property type="match status" value="1"/>
</dbReference>
<dbReference type="PANTHER" id="PTHR33515:SF1">
    <property type="entry name" value="RIBOSOME-BINDING FACTOR A, CHLOROPLASTIC-RELATED"/>
    <property type="match status" value="1"/>
</dbReference>
<dbReference type="Pfam" id="PF02033">
    <property type="entry name" value="RBFA"/>
    <property type="match status" value="1"/>
</dbReference>
<dbReference type="SUPFAM" id="SSF89919">
    <property type="entry name" value="Ribosome-binding factor A, RbfA"/>
    <property type="match status" value="1"/>
</dbReference>
<dbReference type="PROSITE" id="PS01319">
    <property type="entry name" value="RBFA"/>
    <property type="match status" value="1"/>
</dbReference>
<protein>
    <recommendedName>
        <fullName evidence="1">Ribosome-binding factor A</fullName>
    </recommendedName>
</protein>
<comment type="function">
    <text evidence="1">One of several proteins that assist in the late maturation steps of the functional core of the 30S ribosomal subunit. Associates with free 30S ribosomal subunits (but not with 30S subunits that are part of 70S ribosomes or polysomes). Required for efficient processing of 16S rRNA. May interact with the 5'-terminal helix region of 16S rRNA.</text>
</comment>
<comment type="subunit">
    <text evidence="1">Monomer. Binds 30S ribosomal subunits, but not 50S ribosomal subunits or 70S ribosomes.</text>
</comment>
<comment type="subcellular location">
    <subcellularLocation>
        <location evidence="1">Cytoplasm</location>
    </subcellularLocation>
</comment>
<comment type="similarity">
    <text evidence="1">Belongs to the RbfA family.</text>
</comment>
<feature type="chain" id="PRO_1000000159" description="Ribosome-binding factor A">
    <location>
        <begin position="1"/>
        <end position="116"/>
    </location>
</feature>
<gene>
    <name evidence="1" type="primary">rbfA</name>
    <name type="ordered locus">PEPE_0891</name>
</gene>
<name>RBFA_PEDPA</name>
<organism>
    <name type="scientific">Pediococcus pentosaceus (strain ATCC 25745 / CCUG 21536 / LMG 10740 / 183-1w)</name>
    <dbReference type="NCBI Taxonomy" id="278197"/>
    <lineage>
        <taxon>Bacteria</taxon>
        <taxon>Bacillati</taxon>
        <taxon>Bacillota</taxon>
        <taxon>Bacilli</taxon>
        <taxon>Lactobacillales</taxon>
        <taxon>Lactobacillaceae</taxon>
        <taxon>Pediococcus</taxon>
    </lineage>
</organism>
<accession>Q03FS2</accession>
<reference key="1">
    <citation type="journal article" date="2006" name="Proc. Natl. Acad. Sci. U.S.A.">
        <title>Comparative genomics of the lactic acid bacteria.</title>
        <authorList>
            <person name="Makarova K.S."/>
            <person name="Slesarev A."/>
            <person name="Wolf Y.I."/>
            <person name="Sorokin A."/>
            <person name="Mirkin B."/>
            <person name="Koonin E.V."/>
            <person name="Pavlov A."/>
            <person name="Pavlova N."/>
            <person name="Karamychev V."/>
            <person name="Polouchine N."/>
            <person name="Shakhova V."/>
            <person name="Grigoriev I."/>
            <person name="Lou Y."/>
            <person name="Rohksar D."/>
            <person name="Lucas S."/>
            <person name="Huang K."/>
            <person name="Goodstein D.M."/>
            <person name="Hawkins T."/>
            <person name="Plengvidhya V."/>
            <person name="Welker D."/>
            <person name="Hughes J."/>
            <person name="Goh Y."/>
            <person name="Benson A."/>
            <person name="Baldwin K."/>
            <person name="Lee J.-H."/>
            <person name="Diaz-Muniz I."/>
            <person name="Dosti B."/>
            <person name="Smeianov V."/>
            <person name="Wechter W."/>
            <person name="Barabote R."/>
            <person name="Lorca G."/>
            <person name="Altermann E."/>
            <person name="Barrangou R."/>
            <person name="Ganesan B."/>
            <person name="Xie Y."/>
            <person name="Rawsthorne H."/>
            <person name="Tamir D."/>
            <person name="Parker C."/>
            <person name="Breidt F."/>
            <person name="Broadbent J.R."/>
            <person name="Hutkins R."/>
            <person name="O'Sullivan D."/>
            <person name="Steele J."/>
            <person name="Unlu G."/>
            <person name="Saier M.H. Jr."/>
            <person name="Klaenhammer T."/>
            <person name="Richardson P."/>
            <person name="Kozyavkin S."/>
            <person name="Weimer B.C."/>
            <person name="Mills D.A."/>
        </authorList>
    </citation>
    <scope>NUCLEOTIDE SEQUENCE [LARGE SCALE GENOMIC DNA]</scope>
    <source>
        <strain>ATCC 25745 / CCUG 21536 / LMG 10740 / 183-1w</strain>
    </source>
</reference>